<comment type="function">
    <text evidence="1">Involved in DNA repair and RecF pathway recombination.</text>
</comment>
<comment type="similarity">
    <text evidence="1">Belongs to the RecO family.</text>
</comment>
<reference key="1">
    <citation type="journal article" date="2009" name="J. Bacteriol.">
        <title>Genome sequences of three Agrobacterium biovars help elucidate the evolution of multichromosome genomes in bacteria.</title>
        <authorList>
            <person name="Slater S.C."/>
            <person name="Goldman B.S."/>
            <person name="Goodner B."/>
            <person name="Setubal J.C."/>
            <person name="Farrand S.K."/>
            <person name="Nester E.W."/>
            <person name="Burr T.J."/>
            <person name="Banta L."/>
            <person name="Dickerman A.W."/>
            <person name="Paulsen I."/>
            <person name="Otten L."/>
            <person name="Suen G."/>
            <person name="Welch R."/>
            <person name="Almeida N.F."/>
            <person name="Arnold F."/>
            <person name="Burton O.T."/>
            <person name="Du Z."/>
            <person name="Ewing A."/>
            <person name="Godsy E."/>
            <person name="Heisel S."/>
            <person name="Houmiel K.L."/>
            <person name="Jhaveri J."/>
            <person name="Lu J."/>
            <person name="Miller N.M."/>
            <person name="Norton S."/>
            <person name="Chen Q."/>
            <person name="Phoolcharoen W."/>
            <person name="Ohlin V."/>
            <person name="Ondrusek D."/>
            <person name="Pride N."/>
            <person name="Stricklin S.L."/>
            <person name="Sun J."/>
            <person name="Wheeler C."/>
            <person name="Wilson L."/>
            <person name="Zhu H."/>
            <person name="Wood D.W."/>
        </authorList>
    </citation>
    <scope>NUCLEOTIDE SEQUENCE [LARGE SCALE GENOMIC DNA]</scope>
    <source>
        <strain>K84 / ATCC BAA-868</strain>
    </source>
</reference>
<dbReference type="EMBL" id="CP000628">
    <property type="protein sequence ID" value="ACM25997.1"/>
    <property type="molecule type" value="Genomic_DNA"/>
</dbReference>
<dbReference type="RefSeq" id="WP_007693076.1">
    <property type="nucleotide sequence ID" value="NC_011985.1"/>
</dbReference>
<dbReference type="SMR" id="B9JC76"/>
<dbReference type="STRING" id="311403.Arad_1597"/>
<dbReference type="KEGG" id="ara:Arad_1597"/>
<dbReference type="eggNOG" id="COG1381">
    <property type="taxonomic scope" value="Bacteria"/>
</dbReference>
<dbReference type="HOGENOM" id="CLU_086029_0_0_5"/>
<dbReference type="Proteomes" id="UP000001600">
    <property type="component" value="Chromosome 1"/>
</dbReference>
<dbReference type="GO" id="GO:0043590">
    <property type="term" value="C:bacterial nucleoid"/>
    <property type="evidence" value="ECO:0007669"/>
    <property type="project" value="TreeGrafter"/>
</dbReference>
<dbReference type="GO" id="GO:0006310">
    <property type="term" value="P:DNA recombination"/>
    <property type="evidence" value="ECO:0007669"/>
    <property type="project" value="UniProtKB-UniRule"/>
</dbReference>
<dbReference type="GO" id="GO:0006302">
    <property type="term" value="P:double-strand break repair"/>
    <property type="evidence" value="ECO:0007669"/>
    <property type="project" value="TreeGrafter"/>
</dbReference>
<dbReference type="Gene3D" id="2.40.50.140">
    <property type="entry name" value="Nucleic acid-binding proteins"/>
    <property type="match status" value="1"/>
</dbReference>
<dbReference type="Gene3D" id="1.20.1440.120">
    <property type="entry name" value="Recombination protein O, C-terminal domain"/>
    <property type="match status" value="1"/>
</dbReference>
<dbReference type="HAMAP" id="MF_00201">
    <property type="entry name" value="RecO"/>
    <property type="match status" value="1"/>
</dbReference>
<dbReference type="InterPro" id="IPR037278">
    <property type="entry name" value="ARFGAP/RecO"/>
</dbReference>
<dbReference type="InterPro" id="IPR022572">
    <property type="entry name" value="DNA_rep/recomb_RecO_N"/>
</dbReference>
<dbReference type="InterPro" id="IPR012340">
    <property type="entry name" value="NA-bd_OB-fold"/>
</dbReference>
<dbReference type="InterPro" id="IPR003717">
    <property type="entry name" value="RecO"/>
</dbReference>
<dbReference type="InterPro" id="IPR042242">
    <property type="entry name" value="RecO_C"/>
</dbReference>
<dbReference type="NCBIfam" id="TIGR00613">
    <property type="entry name" value="reco"/>
    <property type="match status" value="1"/>
</dbReference>
<dbReference type="PANTHER" id="PTHR33991">
    <property type="entry name" value="DNA REPAIR PROTEIN RECO"/>
    <property type="match status" value="1"/>
</dbReference>
<dbReference type="PANTHER" id="PTHR33991:SF1">
    <property type="entry name" value="DNA REPAIR PROTEIN RECO"/>
    <property type="match status" value="1"/>
</dbReference>
<dbReference type="Pfam" id="PF02565">
    <property type="entry name" value="RecO_C"/>
    <property type="match status" value="1"/>
</dbReference>
<dbReference type="Pfam" id="PF11967">
    <property type="entry name" value="RecO_N"/>
    <property type="match status" value="1"/>
</dbReference>
<dbReference type="SUPFAM" id="SSF57863">
    <property type="entry name" value="ArfGap/RecO-like zinc finger"/>
    <property type="match status" value="1"/>
</dbReference>
<dbReference type="SUPFAM" id="SSF50249">
    <property type="entry name" value="Nucleic acid-binding proteins"/>
    <property type="match status" value="1"/>
</dbReference>
<keyword id="KW-0227">DNA damage</keyword>
<keyword id="KW-0233">DNA recombination</keyword>
<keyword id="KW-0234">DNA repair</keyword>
<evidence type="ECO:0000255" key="1">
    <source>
        <dbReference type="HAMAP-Rule" id="MF_00201"/>
    </source>
</evidence>
<organism>
    <name type="scientific">Rhizobium rhizogenes (strain K84 / ATCC BAA-868)</name>
    <name type="common">Agrobacterium radiobacter</name>
    <dbReference type="NCBI Taxonomy" id="311403"/>
    <lineage>
        <taxon>Bacteria</taxon>
        <taxon>Pseudomonadati</taxon>
        <taxon>Pseudomonadota</taxon>
        <taxon>Alphaproteobacteria</taxon>
        <taxon>Hyphomicrobiales</taxon>
        <taxon>Rhizobiaceae</taxon>
        <taxon>Rhizobium/Agrobacterium group</taxon>
        <taxon>Rhizobium</taxon>
    </lineage>
</organism>
<name>RECO_RHIR8</name>
<sequence length="259" mass="28471">MQWQDHAIILGVKRLGETSVIAEVMTRDRGRHMGLVRSGRSRSMQPVLQPGNLVEVTWRARLHEHLGEFRMEPVRLRAARLMETATAVYGVQAMGALLRLLPERDPHPYLYDALDVILENMQNPMDAGELFVRFELAVLNELGYGLDLGECAATGVRDDLAFVSPKTGRAVCRTAGAPWADKMLALPPFLAAGTVEAANGESLAAAFRLTGFFLHRHVYEPRGIEIAAAREGFIQAALKAVNAVSLDRPDNPPVIAAKR</sequence>
<proteinExistence type="inferred from homology"/>
<gene>
    <name evidence="1" type="primary">recO</name>
    <name type="ordered locus">Arad_1597</name>
</gene>
<feature type="chain" id="PRO_1000193347" description="DNA repair protein RecO">
    <location>
        <begin position="1"/>
        <end position="259"/>
    </location>
</feature>
<accession>B9JC76</accession>
<protein>
    <recommendedName>
        <fullName evidence="1">DNA repair protein RecO</fullName>
    </recommendedName>
    <alternativeName>
        <fullName evidence="1">Recombination protein O</fullName>
    </alternativeName>
</protein>